<organism>
    <name type="scientific">Dictyostelium discoideum</name>
    <name type="common">Social amoeba</name>
    <dbReference type="NCBI Taxonomy" id="44689"/>
    <lineage>
        <taxon>Eukaryota</taxon>
        <taxon>Amoebozoa</taxon>
        <taxon>Evosea</taxon>
        <taxon>Eumycetozoa</taxon>
        <taxon>Dictyostelia</taxon>
        <taxon>Dictyosteliales</taxon>
        <taxon>Dictyosteliaceae</taxon>
        <taxon>Dictyostelium</taxon>
    </lineage>
</organism>
<dbReference type="EMBL" id="AAFI02000079">
    <property type="protein sequence ID" value="EAL64570.1"/>
    <property type="molecule type" value="Genomic_DNA"/>
</dbReference>
<dbReference type="RefSeq" id="XP_638071.1">
    <property type="nucleotide sequence ID" value="XM_632979.1"/>
</dbReference>
<dbReference type="SMR" id="Q54N72"/>
<dbReference type="FunCoup" id="Q54N72">
    <property type="interactions" value="1000"/>
</dbReference>
<dbReference type="STRING" id="44689.Q54N72"/>
<dbReference type="PaxDb" id="44689-DDB0233587"/>
<dbReference type="EnsemblProtists" id="EAL64570">
    <property type="protein sequence ID" value="EAL64570"/>
    <property type="gene ID" value="DDB_G0285465"/>
</dbReference>
<dbReference type="GeneID" id="8625117"/>
<dbReference type="KEGG" id="ddi:DDB_G0285465"/>
<dbReference type="dictyBase" id="DDB_G0285465">
    <property type="gene designation" value="nog1"/>
</dbReference>
<dbReference type="VEuPathDB" id="AmoebaDB:DDB_G0285465"/>
<dbReference type="eggNOG" id="KOG1490">
    <property type="taxonomic scope" value="Eukaryota"/>
</dbReference>
<dbReference type="HOGENOM" id="CLU_011784_4_1_1"/>
<dbReference type="InParanoid" id="Q54N72"/>
<dbReference type="OMA" id="EWKNDVM"/>
<dbReference type="PhylomeDB" id="Q54N72"/>
<dbReference type="PRO" id="PR:Q54N72"/>
<dbReference type="Proteomes" id="UP000002195">
    <property type="component" value="Chromosome 4"/>
</dbReference>
<dbReference type="GO" id="GO:0005730">
    <property type="term" value="C:nucleolus"/>
    <property type="evidence" value="ECO:0000250"/>
    <property type="project" value="dictyBase"/>
</dbReference>
<dbReference type="GO" id="GO:0005525">
    <property type="term" value="F:GTP binding"/>
    <property type="evidence" value="ECO:0000250"/>
    <property type="project" value="dictyBase"/>
</dbReference>
<dbReference type="GO" id="GO:0003924">
    <property type="term" value="F:GTPase activity"/>
    <property type="evidence" value="ECO:0000318"/>
    <property type="project" value="GO_Central"/>
</dbReference>
<dbReference type="GO" id="GO:0003723">
    <property type="term" value="F:RNA binding"/>
    <property type="evidence" value="ECO:0000318"/>
    <property type="project" value="GO_Central"/>
</dbReference>
<dbReference type="GO" id="GO:0042273">
    <property type="term" value="P:ribosomal large subunit biogenesis"/>
    <property type="evidence" value="ECO:0000318"/>
    <property type="project" value="GO_Central"/>
</dbReference>
<dbReference type="GO" id="GO:0006364">
    <property type="term" value="P:rRNA processing"/>
    <property type="evidence" value="ECO:0000250"/>
    <property type="project" value="dictyBase"/>
</dbReference>
<dbReference type="CDD" id="cd01897">
    <property type="entry name" value="NOG"/>
    <property type="match status" value="1"/>
</dbReference>
<dbReference type="FunFam" id="1.20.120.1190:FF:000001">
    <property type="entry name" value="Nucleolar GTP-binding protein 1"/>
    <property type="match status" value="1"/>
</dbReference>
<dbReference type="FunFam" id="3.40.50.300:FF:000496">
    <property type="entry name" value="Nucleolar GTP-binding protein 1"/>
    <property type="match status" value="1"/>
</dbReference>
<dbReference type="Gene3D" id="1.20.120.1190">
    <property type="match status" value="1"/>
</dbReference>
<dbReference type="Gene3D" id="3.40.50.300">
    <property type="entry name" value="P-loop containing nucleotide triphosphate hydrolases"/>
    <property type="match status" value="1"/>
</dbReference>
<dbReference type="InterPro" id="IPR031167">
    <property type="entry name" value="G_OBG"/>
</dbReference>
<dbReference type="InterPro" id="IPR006073">
    <property type="entry name" value="GTP-bd"/>
</dbReference>
<dbReference type="InterPro" id="IPR024926">
    <property type="entry name" value="NOG1"/>
</dbReference>
<dbReference type="InterPro" id="IPR041623">
    <property type="entry name" value="NOG1_N"/>
</dbReference>
<dbReference type="InterPro" id="IPR010674">
    <property type="entry name" value="NOG1_Rossman_fold_dom"/>
</dbReference>
<dbReference type="InterPro" id="IPR012973">
    <property type="entry name" value="NOG_C"/>
</dbReference>
<dbReference type="InterPro" id="IPR027417">
    <property type="entry name" value="P-loop_NTPase"/>
</dbReference>
<dbReference type="PANTHER" id="PTHR45759">
    <property type="entry name" value="NUCLEOLAR GTP-BINDING PROTEIN 1"/>
    <property type="match status" value="1"/>
</dbReference>
<dbReference type="Pfam" id="PF06858">
    <property type="entry name" value="NOG1"/>
    <property type="match status" value="1"/>
</dbReference>
<dbReference type="Pfam" id="PF17835">
    <property type="entry name" value="NOG1_N"/>
    <property type="match status" value="1"/>
</dbReference>
<dbReference type="Pfam" id="PF08155">
    <property type="entry name" value="NOGCT"/>
    <property type="match status" value="1"/>
</dbReference>
<dbReference type="PIRSF" id="PIRSF038919">
    <property type="entry name" value="NOG1"/>
    <property type="match status" value="1"/>
</dbReference>
<dbReference type="PRINTS" id="PR00326">
    <property type="entry name" value="GTP1OBG"/>
</dbReference>
<dbReference type="SUPFAM" id="SSF52540">
    <property type="entry name" value="P-loop containing nucleoside triphosphate hydrolases"/>
    <property type="match status" value="1"/>
</dbReference>
<dbReference type="PROSITE" id="PS51710">
    <property type="entry name" value="G_OBG"/>
    <property type="match status" value="1"/>
</dbReference>
<feature type="chain" id="PRO_0000331215" description="Probable nucleolar GTP-binding protein 1">
    <location>
        <begin position="1"/>
        <end position="674"/>
    </location>
</feature>
<feature type="domain" description="OBG-type G" evidence="2">
    <location>
        <begin position="169"/>
        <end position="346"/>
    </location>
</feature>
<feature type="region of interest" description="Disordered" evidence="3">
    <location>
        <begin position="518"/>
        <end position="538"/>
    </location>
</feature>
<feature type="region of interest" description="Disordered" evidence="3">
    <location>
        <begin position="564"/>
        <end position="674"/>
    </location>
</feature>
<feature type="compositionally biased region" description="Basic and acidic residues" evidence="3">
    <location>
        <begin position="518"/>
        <end position="527"/>
    </location>
</feature>
<feature type="compositionally biased region" description="Basic residues" evidence="3">
    <location>
        <begin position="570"/>
        <end position="580"/>
    </location>
</feature>
<feature type="compositionally biased region" description="Basic and acidic residues" evidence="3">
    <location>
        <begin position="619"/>
        <end position="633"/>
    </location>
</feature>
<feature type="compositionally biased region" description="Basic and acidic residues" evidence="3">
    <location>
        <begin position="641"/>
        <end position="653"/>
    </location>
</feature>
<feature type="binding site" evidence="2">
    <location>
        <begin position="175"/>
        <end position="182"/>
    </location>
    <ligand>
        <name>GTP</name>
        <dbReference type="ChEBI" id="CHEBI:37565"/>
    </ligand>
</feature>
<feature type="binding site" evidence="2">
    <location>
        <begin position="221"/>
        <end position="225"/>
    </location>
    <ligand>
        <name>GTP</name>
        <dbReference type="ChEBI" id="CHEBI:37565"/>
    </ligand>
</feature>
<feature type="binding site" evidence="2">
    <location>
        <begin position="289"/>
        <end position="292"/>
    </location>
    <ligand>
        <name>GTP</name>
        <dbReference type="ChEBI" id="CHEBI:37565"/>
    </ligand>
</feature>
<reference key="1">
    <citation type="journal article" date="2005" name="Nature">
        <title>The genome of the social amoeba Dictyostelium discoideum.</title>
        <authorList>
            <person name="Eichinger L."/>
            <person name="Pachebat J.A."/>
            <person name="Gloeckner G."/>
            <person name="Rajandream M.A."/>
            <person name="Sucgang R."/>
            <person name="Berriman M."/>
            <person name="Song J."/>
            <person name="Olsen R."/>
            <person name="Szafranski K."/>
            <person name="Xu Q."/>
            <person name="Tunggal B."/>
            <person name="Kummerfeld S."/>
            <person name="Madera M."/>
            <person name="Konfortov B.A."/>
            <person name="Rivero F."/>
            <person name="Bankier A.T."/>
            <person name="Lehmann R."/>
            <person name="Hamlin N."/>
            <person name="Davies R."/>
            <person name="Gaudet P."/>
            <person name="Fey P."/>
            <person name="Pilcher K."/>
            <person name="Chen G."/>
            <person name="Saunders D."/>
            <person name="Sodergren E.J."/>
            <person name="Davis P."/>
            <person name="Kerhornou A."/>
            <person name="Nie X."/>
            <person name="Hall N."/>
            <person name="Anjard C."/>
            <person name="Hemphill L."/>
            <person name="Bason N."/>
            <person name="Farbrother P."/>
            <person name="Desany B."/>
            <person name="Just E."/>
            <person name="Morio T."/>
            <person name="Rost R."/>
            <person name="Churcher C.M."/>
            <person name="Cooper J."/>
            <person name="Haydock S."/>
            <person name="van Driessche N."/>
            <person name="Cronin A."/>
            <person name="Goodhead I."/>
            <person name="Muzny D.M."/>
            <person name="Mourier T."/>
            <person name="Pain A."/>
            <person name="Lu M."/>
            <person name="Harper D."/>
            <person name="Lindsay R."/>
            <person name="Hauser H."/>
            <person name="James K.D."/>
            <person name="Quiles M."/>
            <person name="Madan Babu M."/>
            <person name="Saito T."/>
            <person name="Buchrieser C."/>
            <person name="Wardroper A."/>
            <person name="Felder M."/>
            <person name="Thangavelu M."/>
            <person name="Johnson D."/>
            <person name="Knights A."/>
            <person name="Loulseged H."/>
            <person name="Mungall K.L."/>
            <person name="Oliver K."/>
            <person name="Price C."/>
            <person name="Quail M.A."/>
            <person name="Urushihara H."/>
            <person name="Hernandez J."/>
            <person name="Rabbinowitsch E."/>
            <person name="Steffen D."/>
            <person name="Sanders M."/>
            <person name="Ma J."/>
            <person name="Kohara Y."/>
            <person name="Sharp S."/>
            <person name="Simmonds M.N."/>
            <person name="Spiegler S."/>
            <person name="Tivey A."/>
            <person name="Sugano S."/>
            <person name="White B."/>
            <person name="Walker D."/>
            <person name="Woodward J.R."/>
            <person name="Winckler T."/>
            <person name="Tanaka Y."/>
            <person name="Shaulsky G."/>
            <person name="Schleicher M."/>
            <person name="Weinstock G.M."/>
            <person name="Rosenthal A."/>
            <person name="Cox E.C."/>
            <person name="Chisholm R.L."/>
            <person name="Gibbs R.A."/>
            <person name="Loomis W.F."/>
            <person name="Platzer M."/>
            <person name="Kay R.R."/>
            <person name="Williams J.G."/>
            <person name="Dear P.H."/>
            <person name="Noegel A.A."/>
            <person name="Barrell B.G."/>
            <person name="Kuspa A."/>
        </authorList>
    </citation>
    <scope>NUCLEOTIDE SEQUENCE [LARGE SCALE GENOMIC DNA]</scope>
    <source>
        <strain>AX4</strain>
    </source>
</reference>
<reference key="2">
    <citation type="journal article" date="2006" name="Eur. J. Cell Biol.">
        <title>Identification and isolation of Dictyostelium microtubule-associated protein interactors by tandem affinity purification.</title>
        <authorList>
            <person name="Koch K.V."/>
            <person name="Reinders Y."/>
            <person name="Ho T.-H."/>
            <person name="Sickmann A."/>
            <person name="Graef R."/>
        </authorList>
    </citation>
    <scope>IDENTIFICATION BY MASS SPECTROMETRY [LARGE SCALE ANALYSIS]</scope>
    <source>
        <strain>AX2</strain>
    </source>
</reference>
<sequence>MVLYNFKKIQVVPTSKDFIDIVLSKTQRKTPTEIHKQYAIGRIRTFYMRKVKYTAQSYHEKLTQIIGDFPLLDDIHPFYADLINVLYDKDHYKLALGQLNTARNLIDNLSKDYLRLLKYGDSLYRCKQLKRASLGRMCTLMLKQGPSLQYLEQVRQHLARLPSIDPNTRTLLLTGYPNVGKSSFMNKLTRANVDVQPYAFTTKSLFVGHTDFKYNTWQVIDTPGILDHPLDERNTIEMQSITALAHLHSCVLFLIDISERCGYTIKQQVDLFFSIKALFLNKPLLVVLNKIDARRPEDVPEDDWKLIQSLADPARGGIGGTHLIPMSNLTEEGIAKVKDTACSILFEERVEKKLKSTRIEKEIHRLHLAQPQARDKKVRAPCIPESVIAAARQADMDEESDYKKPTLTAAMMEMIEEHENDEKYAQGIIPIYDVNAWKKKYLLKNDEWKFDIVPEIINGQNIADFVDPDILKRLEELEMEEEAFLEELKNAEDDEESDLDEENEALYDEIQEKKHELRINHQIKDSSKPQLSKGRRGIDTKEMASHLKSMHHEDDEIGDIIQSVRDHSKSRISGKKRSRSASRSDSQAPTSEERGLSLNRSKSRQRSTTRIASPAPGEGFHDLAQKEKADKLDKRSRKKRNQDGRKGESDRHVYNLMPKHLFSGKRSGGTNDFR</sequence>
<keyword id="KW-0342">GTP-binding</keyword>
<keyword id="KW-0547">Nucleotide-binding</keyword>
<keyword id="KW-0539">Nucleus</keyword>
<keyword id="KW-1185">Reference proteome</keyword>
<keyword id="KW-0690">Ribosome biogenesis</keyword>
<protein>
    <recommendedName>
        <fullName>Probable nucleolar GTP-binding protein 1</fullName>
    </recommendedName>
</protein>
<comment type="function">
    <text evidence="1">Involved in the biogenesis of the 60S ribosomal subunit.</text>
</comment>
<comment type="subcellular location">
    <subcellularLocation>
        <location evidence="1">Nucleus</location>
        <location evidence="1">Nucleolus</location>
    </subcellularLocation>
</comment>
<comment type="similarity">
    <text evidence="2">Belongs to the TRAFAC class OBG-HflX-like GTPase superfamily. OBG GTPase family. NOG subfamily.</text>
</comment>
<gene>
    <name type="primary">nog1</name>
    <name type="ORF">DDB_G0285465</name>
</gene>
<proteinExistence type="evidence at protein level"/>
<evidence type="ECO:0000250" key="1"/>
<evidence type="ECO:0000255" key="2">
    <source>
        <dbReference type="PROSITE-ProRule" id="PRU01047"/>
    </source>
</evidence>
<evidence type="ECO:0000256" key="3">
    <source>
        <dbReference type="SAM" id="MobiDB-lite"/>
    </source>
</evidence>
<accession>Q54N72</accession>
<name>NOG1_DICDI</name>